<sequence>MGFLDLPFMLKAFRFRRLVVEDGKRRKKKKPLWLTPVSHGYYTVDRLSYADNSSNDDSVFVQREQQSDELEIWLFGVSNAGTGKEIVKYMQNHLFDKLPNELGIMRKCKETMRRAYVEEERTGGSAASVMVVNGEKLAIASIGDHRVVVCKDGEAHQIRDRKASTKHWSQFIFPVCNQGEEEDESDPRNSELVVITEKINSDTEFIIIGSPGIWEVMKSQEAINLIRHIEDPKEAAKCLAKEALNRISKSSISCVVIRFG</sequence>
<dbReference type="EMBL" id="AB015474">
    <property type="protein sequence ID" value="BAB02280.1"/>
    <property type="molecule type" value="Genomic_DNA"/>
</dbReference>
<dbReference type="EMBL" id="CP002686">
    <property type="protein sequence ID" value="AEE76756.1"/>
    <property type="molecule type" value="Genomic_DNA"/>
</dbReference>
<dbReference type="RefSeq" id="NP_188978.2">
    <property type="nucleotide sequence ID" value="NM_113239.3"/>
</dbReference>
<dbReference type="SMR" id="Q9LW60"/>
<dbReference type="STRING" id="3702.Q9LW60"/>
<dbReference type="PaxDb" id="3702-AT3G23360.1"/>
<dbReference type="ProteomicsDB" id="248714"/>
<dbReference type="EnsemblPlants" id="AT3G23360.1">
    <property type="protein sequence ID" value="AT3G23360.1"/>
    <property type="gene ID" value="AT3G23360"/>
</dbReference>
<dbReference type="GeneID" id="821917"/>
<dbReference type="Gramene" id="AT3G23360.1">
    <property type="protein sequence ID" value="AT3G23360.1"/>
    <property type="gene ID" value="AT3G23360"/>
</dbReference>
<dbReference type="KEGG" id="ath:AT3G23360"/>
<dbReference type="Araport" id="AT3G23360"/>
<dbReference type="TAIR" id="AT3G23360"/>
<dbReference type="eggNOG" id="KOG0698">
    <property type="taxonomic scope" value="Eukaryota"/>
</dbReference>
<dbReference type="HOGENOM" id="CLU_013173_0_1_1"/>
<dbReference type="InParanoid" id="Q9LW60"/>
<dbReference type="OMA" id="GTKHSKG"/>
<dbReference type="PhylomeDB" id="Q9LW60"/>
<dbReference type="Proteomes" id="UP000006548">
    <property type="component" value="Chromosome 3"/>
</dbReference>
<dbReference type="ExpressionAtlas" id="Q9LW60">
    <property type="expression patterns" value="baseline and differential"/>
</dbReference>
<dbReference type="GO" id="GO:0004722">
    <property type="term" value="F:protein serine/threonine phosphatase activity"/>
    <property type="evidence" value="ECO:0007669"/>
    <property type="project" value="InterPro"/>
</dbReference>
<dbReference type="CDD" id="cd00143">
    <property type="entry name" value="PP2Cc"/>
    <property type="match status" value="1"/>
</dbReference>
<dbReference type="Gene3D" id="3.60.40.10">
    <property type="entry name" value="PPM-type phosphatase domain"/>
    <property type="match status" value="2"/>
</dbReference>
<dbReference type="InterPro" id="IPR015655">
    <property type="entry name" value="PP2C"/>
</dbReference>
<dbReference type="InterPro" id="IPR036457">
    <property type="entry name" value="PPM-type-like_dom_sf"/>
</dbReference>
<dbReference type="InterPro" id="IPR001932">
    <property type="entry name" value="PPM-type_phosphatase-like_dom"/>
</dbReference>
<dbReference type="PANTHER" id="PTHR47992">
    <property type="entry name" value="PROTEIN PHOSPHATASE"/>
    <property type="match status" value="1"/>
</dbReference>
<dbReference type="Pfam" id="PF00481">
    <property type="entry name" value="PP2C"/>
    <property type="match status" value="2"/>
</dbReference>
<dbReference type="SMART" id="SM00332">
    <property type="entry name" value="PP2Cc"/>
    <property type="match status" value="1"/>
</dbReference>
<dbReference type="SUPFAM" id="SSF81606">
    <property type="entry name" value="PP2C-like"/>
    <property type="match status" value="1"/>
</dbReference>
<dbReference type="PROSITE" id="PS51746">
    <property type="entry name" value="PPM_2"/>
    <property type="match status" value="1"/>
</dbReference>
<comment type="similarity">
    <text evidence="2">Belongs to the PP2C family.</text>
</comment>
<comment type="caution">
    <text evidence="2">Although related to the protein phosphatase 2C family, lacks the conserved residues that bind manganese, suggesting it has no phosphatase activity.</text>
</comment>
<comment type="caution">
    <text evidence="2">Could be the product of a pseudogene.</text>
</comment>
<organism>
    <name type="scientific">Arabidopsis thaliana</name>
    <name type="common">Mouse-ear cress</name>
    <dbReference type="NCBI Taxonomy" id="3702"/>
    <lineage>
        <taxon>Eukaryota</taxon>
        <taxon>Viridiplantae</taxon>
        <taxon>Streptophyta</taxon>
        <taxon>Embryophyta</taxon>
        <taxon>Tracheophyta</taxon>
        <taxon>Spermatophyta</taxon>
        <taxon>Magnoliopsida</taxon>
        <taxon>eudicotyledons</taxon>
        <taxon>Gunneridae</taxon>
        <taxon>Pentapetalae</taxon>
        <taxon>rosids</taxon>
        <taxon>malvids</taxon>
        <taxon>Brassicales</taxon>
        <taxon>Brassicaceae</taxon>
        <taxon>Camelineae</taxon>
        <taxon>Arabidopsis</taxon>
    </lineage>
</organism>
<proteinExistence type="uncertain"/>
<gene>
    <name type="ordered locus">At3g23360</name>
    <name type="ORF">MLM24.7</name>
    <name type="ORF">MLM24.9</name>
</gene>
<feature type="chain" id="PRO_0000367968" description="Putative protein phosphatase 2C-like protein 44">
    <location>
        <begin position="1"/>
        <end position="260"/>
    </location>
</feature>
<feature type="domain" description="PPM-type phosphatase" evidence="1">
    <location>
        <begin position="41"/>
        <end position="259"/>
    </location>
</feature>
<accession>Q9LW60</accession>
<reference key="1">
    <citation type="journal article" date="2000" name="DNA Res.">
        <title>Structural analysis of Arabidopsis thaliana chromosome 3. I. Sequence features of the regions of 4,504,864 bp covered by sixty P1 and TAC clones.</title>
        <authorList>
            <person name="Sato S."/>
            <person name="Nakamura Y."/>
            <person name="Kaneko T."/>
            <person name="Katoh T."/>
            <person name="Asamizu E."/>
            <person name="Tabata S."/>
        </authorList>
    </citation>
    <scope>NUCLEOTIDE SEQUENCE [LARGE SCALE GENOMIC DNA]</scope>
    <source>
        <strain>cv. Columbia</strain>
    </source>
</reference>
<reference key="2">
    <citation type="journal article" date="2017" name="Plant J.">
        <title>Araport11: a complete reannotation of the Arabidopsis thaliana reference genome.</title>
        <authorList>
            <person name="Cheng C.Y."/>
            <person name="Krishnakumar V."/>
            <person name="Chan A.P."/>
            <person name="Thibaud-Nissen F."/>
            <person name="Schobel S."/>
            <person name="Town C.D."/>
        </authorList>
    </citation>
    <scope>GENOME REANNOTATION</scope>
    <source>
        <strain>cv. Columbia</strain>
    </source>
</reference>
<reference key="3">
    <citation type="journal article" date="2008" name="BMC Genomics">
        <title>Genome-wide and expression analysis of protein phosphatase 2C in rice and Arabidopsis.</title>
        <authorList>
            <person name="Xue T."/>
            <person name="Wang D."/>
            <person name="Zhang S."/>
            <person name="Ehlting J."/>
            <person name="Ni F."/>
            <person name="Jacab S."/>
            <person name="Zheng C."/>
            <person name="Zhong Y."/>
        </authorList>
    </citation>
    <scope>GENE FAMILY</scope>
    <scope>NOMENCLATURE</scope>
</reference>
<protein>
    <recommendedName>
        <fullName>Putative protein phosphatase 2C-like protein 44</fullName>
        <shortName>AtPP2C44</shortName>
    </recommendedName>
</protein>
<evidence type="ECO:0000255" key="1">
    <source>
        <dbReference type="PROSITE-ProRule" id="PRU01082"/>
    </source>
</evidence>
<evidence type="ECO:0000305" key="2"/>
<keyword id="KW-1185">Reference proteome</keyword>
<name>P2C44_ARATH</name>